<feature type="chain" id="PRO_1000195461" description="6,7-dimethyl-8-ribityllumazine synthase">
    <location>
        <begin position="1"/>
        <end position="153"/>
    </location>
</feature>
<feature type="active site" description="Proton donor" evidence="1">
    <location>
        <position position="87"/>
    </location>
</feature>
<feature type="binding site" evidence="1">
    <location>
        <position position="21"/>
    </location>
    <ligand>
        <name>5-amino-6-(D-ribitylamino)uracil</name>
        <dbReference type="ChEBI" id="CHEBI:15934"/>
    </ligand>
</feature>
<feature type="binding site" evidence="1">
    <location>
        <begin position="55"/>
        <end position="57"/>
    </location>
    <ligand>
        <name>5-amino-6-(D-ribitylamino)uracil</name>
        <dbReference type="ChEBI" id="CHEBI:15934"/>
    </ligand>
</feature>
<feature type="binding site" evidence="1">
    <location>
        <begin position="79"/>
        <end position="81"/>
    </location>
    <ligand>
        <name>5-amino-6-(D-ribitylamino)uracil</name>
        <dbReference type="ChEBI" id="CHEBI:15934"/>
    </ligand>
</feature>
<feature type="binding site" evidence="1">
    <location>
        <begin position="84"/>
        <end position="85"/>
    </location>
    <ligand>
        <name>(2S)-2-hydroxy-3-oxobutyl phosphate</name>
        <dbReference type="ChEBI" id="CHEBI:58830"/>
    </ligand>
</feature>
<feature type="binding site" evidence="1">
    <location>
        <position position="112"/>
    </location>
    <ligand>
        <name>5-amino-6-(D-ribitylamino)uracil</name>
        <dbReference type="ChEBI" id="CHEBI:15934"/>
    </ligand>
</feature>
<feature type="binding site" evidence="1">
    <location>
        <position position="126"/>
    </location>
    <ligand>
        <name>(2S)-2-hydroxy-3-oxobutyl phosphate</name>
        <dbReference type="ChEBI" id="CHEBI:58830"/>
    </ligand>
</feature>
<evidence type="ECO:0000255" key="1">
    <source>
        <dbReference type="HAMAP-Rule" id="MF_00178"/>
    </source>
</evidence>
<proteinExistence type="inferred from homology"/>
<accession>B7IWM6</accession>
<dbReference type="EC" id="2.5.1.78" evidence="1"/>
<dbReference type="EMBL" id="CP001186">
    <property type="protein sequence ID" value="ACK93568.1"/>
    <property type="molecule type" value="Genomic_DNA"/>
</dbReference>
<dbReference type="RefSeq" id="WP_000230895.1">
    <property type="nucleotide sequence ID" value="NC_011772.1"/>
</dbReference>
<dbReference type="SMR" id="B7IWM6"/>
<dbReference type="GeneID" id="92883459"/>
<dbReference type="KEGG" id="bcg:BCG9842_B1014"/>
<dbReference type="HOGENOM" id="CLU_089358_1_1_9"/>
<dbReference type="UniPathway" id="UPA00275">
    <property type="reaction ID" value="UER00404"/>
</dbReference>
<dbReference type="Proteomes" id="UP000006744">
    <property type="component" value="Chromosome"/>
</dbReference>
<dbReference type="GO" id="GO:0005829">
    <property type="term" value="C:cytosol"/>
    <property type="evidence" value="ECO:0007669"/>
    <property type="project" value="TreeGrafter"/>
</dbReference>
<dbReference type="GO" id="GO:0009349">
    <property type="term" value="C:riboflavin synthase complex"/>
    <property type="evidence" value="ECO:0007669"/>
    <property type="project" value="InterPro"/>
</dbReference>
<dbReference type="GO" id="GO:0000906">
    <property type="term" value="F:6,7-dimethyl-8-ribityllumazine synthase activity"/>
    <property type="evidence" value="ECO:0007669"/>
    <property type="project" value="UniProtKB-UniRule"/>
</dbReference>
<dbReference type="GO" id="GO:0009231">
    <property type="term" value="P:riboflavin biosynthetic process"/>
    <property type="evidence" value="ECO:0007669"/>
    <property type="project" value="UniProtKB-UniRule"/>
</dbReference>
<dbReference type="CDD" id="cd09209">
    <property type="entry name" value="Lumazine_synthase-I"/>
    <property type="match status" value="1"/>
</dbReference>
<dbReference type="FunFam" id="3.40.50.960:FF:000001">
    <property type="entry name" value="6,7-dimethyl-8-ribityllumazine synthase"/>
    <property type="match status" value="1"/>
</dbReference>
<dbReference type="Gene3D" id="3.40.50.960">
    <property type="entry name" value="Lumazine/riboflavin synthase"/>
    <property type="match status" value="1"/>
</dbReference>
<dbReference type="HAMAP" id="MF_00178">
    <property type="entry name" value="Lumazine_synth"/>
    <property type="match status" value="1"/>
</dbReference>
<dbReference type="InterPro" id="IPR034964">
    <property type="entry name" value="LS"/>
</dbReference>
<dbReference type="InterPro" id="IPR002180">
    <property type="entry name" value="LS/RS"/>
</dbReference>
<dbReference type="InterPro" id="IPR036467">
    <property type="entry name" value="LS/RS_sf"/>
</dbReference>
<dbReference type="NCBIfam" id="TIGR00114">
    <property type="entry name" value="lumazine-synth"/>
    <property type="match status" value="1"/>
</dbReference>
<dbReference type="NCBIfam" id="NF000812">
    <property type="entry name" value="PRK00061.1-4"/>
    <property type="match status" value="1"/>
</dbReference>
<dbReference type="PANTHER" id="PTHR21058:SF0">
    <property type="entry name" value="6,7-DIMETHYL-8-RIBITYLLUMAZINE SYNTHASE"/>
    <property type="match status" value="1"/>
</dbReference>
<dbReference type="PANTHER" id="PTHR21058">
    <property type="entry name" value="6,7-DIMETHYL-8-RIBITYLLUMAZINE SYNTHASE DMRL SYNTHASE LUMAZINE SYNTHASE"/>
    <property type="match status" value="1"/>
</dbReference>
<dbReference type="Pfam" id="PF00885">
    <property type="entry name" value="DMRL_synthase"/>
    <property type="match status" value="1"/>
</dbReference>
<dbReference type="SUPFAM" id="SSF52121">
    <property type="entry name" value="Lumazine synthase"/>
    <property type="match status" value="1"/>
</dbReference>
<protein>
    <recommendedName>
        <fullName evidence="1">6,7-dimethyl-8-ribityllumazine synthase</fullName>
        <shortName evidence="1">DMRL synthase</shortName>
        <shortName evidence="1">LS</shortName>
        <shortName evidence="1">Lumazine synthase</shortName>
        <ecNumber evidence="1">2.5.1.78</ecNumber>
    </recommendedName>
</protein>
<name>RISB_BACC2</name>
<keyword id="KW-0686">Riboflavin biosynthesis</keyword>
<keyword id="KW-0808">Transferase</keyword>
<comment type="function">
    <text evidence="1">Catalyzes the formation of 6,7-dimethyl-8-ribityllumazine by condensation of 5-amino-6-(D-ribitylamino)uracil with 3,4-dihydroxy-2-butanone 4-phosphate. This is the penultimate step in the biosynthesis of riboflavin.</text>
</comment>
<comment type="catalytic activity">
    <reaction evidence="1">
        <text>(2S)-2-hydroxy-3-oxobutyl phosphate + 5-amino-6-(D-ribitylamino)uracil = 6,7-dimethyl-8-(1-D-ribityl)lumazine + phosphate + 2 H2O + H(+)</text>
        <dbReference type="Rhea" id="RHEA:26152"/>
        <dbReference type="ChEBI" id="CHEBI:15377"/>
        <dbReference type="ChEBI" id="CHEBI:15378"/>
        <dbReference type="ChEBI" id="CHEBI:15934"/>
        <dbReference type="ChEBI" id="CHEBI:43474"/>
        <dbReference type="ChEBI" id="CHEBI:58201"/>
        <dbReference type="ChEBI" id="CHEBI:58830"/>
        <dbReference type="EC" id="2.5.1.78"/>
    </reaction>
</comment>
<comment type="pathway">
    <text evidence="1">Cofactor biosynthesis; riboflavin biosynthesis; riboflavin from 2-hydroxy-3-oxobutyl phosphate and 5-amino-6-(D-ribitylamino)uracil: step 1/2.</text>
</comment>
<comment type="subunit">
    <text evidence="1">Forms an icosahedral capsid composed of 60 subunits, arranged as a dodecamer of pentamers.</text>
</comment>
<comment type="similarity">
    <text evidence="1">Belongs to the DMRL synthase family.</text>
</comment>
<gene>
    <name evidence="1" type="primary">ribH</name>
    <name type="ordered locus">BCG9842_B1014</name>
</gene>
<sequence length="153" mass="16249">MVFEGHLVGTGLKVGVVVGRFNEFITSKLLGGALDGLKRHGVEENDIDVAWVPGAFEIPLIAKKMASSGKYDAVITLGTVIRGATTHYDYVCNEVAKGVASLSLQMDIPVIFGVLTTETIEQAIERAGTKAGNKGYESAVAAIEMAHLSKQWA</sequence>
<reference key="1">
    <citation type="submission" date="2008-10" db="EMBL/GenBank/DDBJ databases">
        <title>Genome sequence of Bacillus cereus G9842.</title>
        <authorList>
            <person name="Dodson R.J."/>
            <person name="Durkin A.S."/>
            <person name="Rosovitz M.J."/>
            <person name="Rasko D.A."/>
            <person name="Hoffmaster A."/>
            <person name="Ravel J."/>
            <person name="Sutton G."/>
        </authorList>
    </citation>
    <scope>NUCLEOTIDE SEQUENCE [LARGE SCALE GENOMIC DNA]</scope>
    <source>
        <strain>G9842</strain>
    </source>
</reference>
<organism>
    <name type="scientific">Bacillus cereus (strain G9842)</name>
    <dbReference type="NCBI Taxonomy" id="405531"/>
    <lineage>
        <taxon>Bacteria</taxon>
        <taxon>Bacillati</taxon>
        <taxon>Bacillota</taxon>
        <taxon>Bacilli</taxon>
        <taxon>Bacillales</taxon>
        <taxon>Bacillaceae</taxon>
        <taxon>Bacillus</taxon>
        <taxon>Bacillus cereus group</taxon>
    </lineage>
</organism>